<evidence type="ECO:0000305" key="1"/>
<feature type="chain" id="PRO_0000169449" description="UPF0597 protein HI_0855">
    <location>
        <begin position="1"/>
        <end position="115"/>
    </location>
</feature>
<sequence>MNLERLNEIEKPLLHIVKHDVMPALGCTEPISLALASATAAKYLGKTPERIEAKVSPNLMKNGLGVAVPGTGMVGLPIAAAMKVLSNTILIELLIISVLLHQKVCSISTDRLSKL</sequence>
<keyword id="KW-1185">Reference proteome</keyword>
<comment type="similarity">
    <text evidence="1">Belongs to the UPF0597 family.</text>
</comment>
<name>Y855_HAEIN</name>
<proteinExistence type="inferred from homology"/>
<protein>
    <recommendedName>
        <fullName>UPF0597 protein HI_0855</fullName>
    </recommendedName>
</protein>
<accession>P44904</accession>
<organism>
    <name type="scientific">Haemophilus influenzae (strain ATCC 51907 / DSM 11121 / KW20 / Rd)</name>
    <dbReference type="NCBI Taxonomy" id="71421"/>
    <lineage>
        <taxon>Bacteria</taxon>
        <taxon>Pseudomonadati</taxon>
        <taxon>Pseudomonadota</taxon>
        <taxon>Gammaproteobacteria</taxon>
        <taxon>Pasteurellales</taxon>
        <taxon>Pasteurellaceae</taxon>
        <taxon>Haemophilus</taxon>
    </lineage>
</organism>
<dbReference type="EMBL" id="L42023">
    <property type="protein sequence ID" value="AAC22514.1"/>
    <property type="molecule type" value="Genomic_DNA"/>
</dbReference>
<dbReference type="PIR" id="C64160">
    <property type="entry name" value="C64160"/>
</dbReference>
<dbReference type="RefSeq" id="NP_439015.1">
    <property type="nucleotide sequence ID" value="NC_000907.1"/>
</dbReference>
<dbReference type="STRING" id="71421.HI_0855"/>
<dbReference type="EnsemblBacteria" id="AAC22514">
    <property type="protein sequence ID" value="AAC22514"/>
    <property type="gene ID" value="HI_0855"/>
</dbReference>
<dbReference type="KEGG" id="hin:HI_0855"/>
<dbReference type="PATRIC" id="fig|71421.8.peg.896"/>
<dbReference type="eggNOG" id="COG3681">
    <property type="taxonomic scope" value="Bacteria"/>
</dbReference>
<dbReference type="HOGENOM" id="CLU_2105530_0_0_6"/>
<dbReference type="OrthoDB" id="41906at2"/>
<dbReference type="BioCyc" id="HINF71421:G1GJ1-895-MONOMER"/>
<dbReference type="Proteomes" id="UP000000579">
    <property type="component" value="Chromosome"/>
</dbReference>
<dbReference type="InterPro" id="IPR021144">
    <property type="entry name" value="UPF0597"/>
</dbReference>
<dbReference type="PANTHER" id="PTHR30501">
    <property type="entry name" value="UPF0597 PROTEIN YHAM"/>
    <property type="match status" value="1"/>
</dbReference>
<dbReference type="PANTHER" id="PTHR30501:SF2">
    <property type="entry name" value="UPF0597 PROTEIN YHAM"/>
    <property type="match status" value="1"/>
</dbReference>
<gene>
    <name type="ordered locus">HI_0855</name>
</gene>
<reference key="1">
    <citation type="journal article" date="1995" name="Science">
        <title>Whole-genome random sequencing and assembly of Haemophilus influenzae Rd.</title>
        <authorList>
            <person name="Fleischmann R.D."/>
            <person name="Adams M.D."/>
            <person name="White O."/>
            <person name="Clayton R.A."/>
            <person name="Kirkness E.F."/>
            <person name="Kerlavage A.R."/>
            <person name="Bult C.J."/>
            <person name="Tomb J.-F."/>
            <person name="Dougherty B.A."/>
            <person name="Merrick J.M."/>
            <person name="McKenney K."/>
            <person name="Sutton G.G."/>
            <person name="FitzHugh W."/>
            <person name="Fields C.A."/>
            <person name="Gocayne J.D."/>
            <person name="Scott J.D."/>
            <person name="Shirley R."/>
            <person name="Liu L.-I."/>
            <person name="Glodek A."/>
            <person name="Kelley J.M."/>
            <person name="Weidman J.F."/>
            <person name="Phillips C.A."/>
            <person name="Spriggs T."/>
            <person name="Hedblom E."/>
            <person name="Cotton M.D."/>
            <person name="Utterback T.R."/>
            <person name="Hanna M.C."/>
            <person name="Nguyen D.T."/>
            <person name="Saudek D.M."/>
            <person name="Brandon R.C."/>
            <person name="Fine L.D."/>
            <person name="Fritchman J.L."/>
            <person name="Fuhrmann J.L."/>
            <person name="Geoghagen N.S.M."/>
            <person name="Gnehm C.L."/>
            <person name="McDonald L.A."/>
            <person name="Small K.V."/>
            <person name="Fraser C.M."/>
            <person name="Smith H.O."/>
            <person name="Venter J.C."/>
        </authorList>
    </citation>
    <scope>NUCLEOTIDE SEQUENCE [LARGE SCALE GENOMIC DNA]</scope>
    <source>
        <strain>ATCC 51907 / DSM 11121 / KW20 / Rd</strain>
    </source>
</reference>